<sequence length="569" mass="61774">MAIAIGLDFGSDSVRALAVECRTGQEIATSVEWYPRWQEGRYCDAPNNQFRHHPRDYIESMEAAIKTVLAELSEEQRAQIVGIGVDSTGSTPAPVDAEGRVLALRPEFADNPNAMFVLWKDHTAVEEAEAITRLCHQPGKADYSRYIGGIYSSEWFWAKILHVTRADPAVAQAAVSWIELCDWVPALLSGTTRPQDIRRGRCSAGHKSLWHESWGGLPPAAFFDELDPIINQSLKYPLFTDTFTADIPVGTLNEEWARRLGLPQNVAISGGAFDCHMGAVGAGAQPNTLVKVIGTSTCDILTADKATVGDRAVKGICGQVDGSVVPDFIGLEAGQSAFGDIYAWFGRVLGWPLDQLAATHPELKPQIDASKKQLLPQLTEAWAKNPSLDHLPVVLDWFNGRRTPFANQRLKGVITDLNLATDAPALFGGLIAATAFGARAIMECFTEQGIAVNEVMALGGIARKNQVIMQACCDVLNRPLQIVASDQCCALGAAIFAAVAAGVHADIPTAQQHMASAVENTLQPRAQQAQRFEQLYQRYLQWSKSAEQHYLPVATPAKTSAEKPATLTH</sequence>
<reference key="1">
    <citation type="journal article" date="2010" name="PLoS Genet.">
        <title>Genome sequence of the plant growth promoting endophytic bacterium Enterobacter sp. 638.</title>
        <authorList>
            <person name="Taghavi S."/>
            <person name="van der Lelie D."/>
            <person name="Hoffman A."/>
            <person name="Zhang Y.B."/>
            <person name="Walla M.D."/>
            <person name="Vangronsveld J."/>
            <person name="Newman L."/>
            <person name="Monchy S."/>
        </authorList>
    </citation>
    <scope>NUCLEOTIDE SEQUENCE [LARGE SCALE GENOMIC DNA]</scope>
    <source>
        <strain>638</strain>
    </source>
</reference>
<protein>
    <recommendedName>
        <fullName evidence="1">Ribulokinase</fullName>
        <ecNumber evidence="1">2.7.1.16</ecNumber>
    </recommendedName>
</protein>
<keyword id="KW-0054">Arabinose catabolism</keyword>
<keyword id="KW-0067">ATP-binding</keyword>
<keyword id="KW-0119">Carbohydrate metabolism</keyword>
<keyword id="KW-0418">Kinase</keyword>
<keyword id="KW-0547">Nucleotide-binding</keyword>
<keyword id="KW-0808">Transferase</keyword>
<feature type="chain" id="PRO_1000060919" description="Ribulokinase">
    <location>
        <begin position="1"/>
        <end position="569"/>
    </location>
</feature>
<comment type="catalytic activity">
    <reaction evidence="1">
        <text>D-ribulose + ATP = D-ribulose 5-phosphate + ADP + H(+)</text>
        <dbReference type="Rhea" id="RHEA:17601"/>
        <dbReference type="ChEBI" id="CHEBI:15378"/>
        <dbReference type="ChEBI" id="CHEBI:17173"/>
        <dbReference type="ChEBI" id="CHEBI:30616"/>
        <dbReference type="ChEBI" id="CHEBI:58121"/>
        <dbReference type="ChEBI" id="CHEBI:456216"/>
        <dbReference type="EC" id="2.7.1.16"/>
    </reaction>
</comment>
<comment type="catalytic activity">
    <reaction evidence="1">
        <text>L-ribulose + ATP = L-ribulose 5-phosphate + ADP + H(+)</text>
        <dbReference type="Rhea" id="RHEA:22072"/>
        <dbReference type="ChEBI" id="CHEBI:15378"/>
        <dbReference type="ChEBI" id="CHEBI:16880"/>
        <dbReference type="ChEBI" id="CHEBI:30616"/>
        <dbReference type="ChEBI" id="CHEBI:58226"/>
        <dbReference type="ChEBI" id="CHEBI:456216"/>
        <dbReference type="EC" id="2.7.1.16"/>
    </reaction>
</comment>
<comment type="pathway">
    <text evidence="1">Carbohydrate degradation; L-arabinose degradation via L-ribulose; D-xylulose 5-phosphate from L-arabinose (bacterial route): step 2/3.</text>
</comment>
<comment type="similarity">
    <text evidence="1">Belongs to the ribulokinase family.</text>
</comment>
<organism>
    <name type="scientific">Enterobacter sp. (strain 638)</name>
    <dbReference type="NCBI Taxonomy" id="399742"/>
    <lineage>
        <taxon>Bacteria</taxon>
        <taxon>Pseudomonadati</taxon>
        <taxon>Pseudomonadota</taxon>
        <taxon>Gammaproteobacteria</taxon>
        <taxon>Enterobacterales</taxon>
        <taxon>Enterobacteriaceae</taxon>
        <taxon>Enterobacter</taxon>
    </lineage>
</organism>
<accession>A4W6G7</accession>
<evidence type="ECO:0000255" key="1">
    <source>
        <dbReference type="HAMAP-Rule" id="MF_00520"/>
    </source>
</evidence>
<gene>
    <name evidence="1" type="primary">araB</name>
    <name type="ordered locus">Ent638_0610</name>
</gene>
<dbReference type="EC" id="2.7.1.16" evidence="1"/>
<dbReference type="EMBL" id="CP000653">
    <property type="protein sequence ID" value="ABP59297.1"/>
    <property type="molecule type" value="Genomic_DNA"/>
</dbReference>
<dbReference type="RefSeq" id="WP_012016019.1">
    <property type="nucleotide sequence ID" value="NC_009436.1"/>
</dbReference>
<dbReference type="SMR" id="A4W6G7"/>
<dbReference type="STRING" id="399742.Ent638_0610"/>
<dbReference type="KEGG" id="ent:Ent638_0610"/>
<dbReference type="eggNOG" id="COG1069">
    <property type="taxonomic scope" value="Bacteria"/>
</dbReference>
<dbReference type="HOGENOM" id="CLU_009281_9_1_6"/>
<dbReference type="OrthoDB" id="9805576at2"/>
<dbReference type="UniPathway" id="UPA00145">
    <property type="reaction ID" value="UER00566"/>
</dbReference>
<dbReference type="Proteomes" id="UP000000230">
    <property type="component" value="Chromosome"/>
</dbReference>
<dbReference type="GO" id="GO:0005737">
    <property type="term" value="C:cytoplasm"/>
    <property type="evidence" value="ECO:0007669"/>
    <property type="project" value="TreeGrafter"/>
</dbReference>
<dbReference type="GO" id="GO:0005524">
    <property type="term" value="F:ATP binding"/>
    <property type="evidence" value="ECO:0007669"/>
    <property type="project" value="UniProtKB-KW"/>
</dbReference>
<dbReference type="GO" id="GO:0019150">
    <property type="term" value="F:D-ribulokinase activity"/>
    <property type="evidence" value="ECO:0007669"/>
    <property type="project" value="TreeGrafter"/>
</dbReference>
<dbReference type="GO" id="GO:0008741">
    <property type="term" value="F:ribulokinase activity"/>
    <property type="evidence" value="ECO:0007669"/>
    <property type="project" value="UniProtKB-UniRule"/>
</dbReference>
<dbReference type="GO" id="GO:0019569">
    <property type="term" value="P:L-arabinose catabolic process to xylulose 5-phosphate"/>
    <property type="evidence" value="ECO:0007669"/>
    <property type="project" value="UniProtKB-UniRule"/>
</dbReference>
<dbReference type="CDD" id="cd07781">
    <property type="entry name" value="ASKHA_NBD_FGGY_L-RBK"/>
    <property type="match status" value="1"/>
</dbReference>
<dbReference type="Gene3D" id="1.20.58.2240">
    <property type="match status" value="1"/>
</dbReference>
<dbReference type="Gene3D" id="3.30.420.40">
    <property type="match status" value="1"/>
</dbReference>
<dbReference type="HAMAP" id="MF_00520">
    <property type="entry name" value="Ribulokinase"/>
    <property type="match status" value="1"/>
</dbReference>
<dbReference type="InterPro" id="IPR043129">
    <property type="entry name" value="ATPase_NBD"/>
</dbReference>
<dbReference type="InterPro" id="IPR018485">
    <property type="entry name" value="FGGY_C"/>
</dbReference>
<dbReference type="InterPro" id="IPR005929">
    <property type="entry name" value="Ribulokinase"/>
</dbReference>
<dbReference type="NCBIfam" id="TIGR01234">
    <property type="entry name" value="L-ribulokinase"/>
    <property type="match status" value="1"/>
</dbReference>
<dbReference type="NCBIfam" id="NF003154">
    <property type="entry name" value="PRK04123.1"/>
    <property type="match status" value="1"/>
</dbReference>
<dbReference type="PANTHER" id="PTHR43435:SF4">
    <property type="entry name" value="FGGY CARBOHYDRATE KINASE DOMAIN-CONTAINING PROTEIN"/>
    <property type="match status" value="1"/>
</dbReference>
<dbReference type="PANTHER" id="PTHR43435">
    <property type="entry name" value="RIBULOKINASE"/>
    <property type="match status" value="1"/>
</dbReference>
<dbReference type="Pfam" id="PF02782">
    <property type="entry name" value="FGGY_C"/>
    <property type="match status" value="1"/>
</dbReference>
<dbReference type="SUPFAM" id="SSF53067">
    <property type="entry name" value="Actin-like ATPase domain"/>
    <property type="match status" value="2"/>
</dbReference>
<proteinExistence type="inferred from homology"/>
<name>ARAB_ENT38</name>